<organism>
    <name type="scientific">Oryctolagus cuniculus</name>
    <name type="common">Rabbit</name>
    <dbReference type="NCBI Taxonomy" id="9986"/>
    <lineage>
        <taxon>Eukaryota</taxon>
        <taxon>Metazoa</taxon>
        <taxon>Chordata</taxon>
        <taxon>Craniata</taxon>
        <taxon>Vertebrata</taxon>
        <taxon>Euteleostomi</taxon>
        <taxon>Mammalia</taxon>
        <taxon>Eutheria</taxon>
        <taxon>Euarchontoglires</taxon>
        <taxon>Glires</taxon>
        <taxon>Lagomorpha</taxon>
        <taxon>Leporidae</taxon>
        <taxon>Oryctolagus</taxon>
    </lineage>
</organism>
<comment type="function">
    <text evidence="1">Involved in vitamin D transport and storage, scavenging of extracellular G-actin, enhancement of the chemotactic activity of C5 alpha for neutrophils in inflammation and macrophage activation.</text>
</comment>
<comment type="subunit">
    <text evidence="1 2">Associates with membrane-bound immunoglobulin on the surface of B-lymphocytes and with IgG Fc receptor on the membranes of T-lymphocytes. Interacts with LRP2; the interaction is required for renal uptake of GC in complex with 25-hydroxyvitamin D3.</text>
</comment>
<comment type="subcellular location">
    <subcellularLocation>
        <location evidence="2">Secreted</location>
    </subcellularLocation>
</comment>
<comment type="similarity">
    <text evidence="4">Belongs to the ALB/AFP/VDB family.</text>
</comment>
<keyword id="KW-0009">Actin-binding</keyword>
<keyword id="KW-1015">Disulfide bond</keyword>
<keyword id="KW-0325">Glycoprotein</keyword>
<keyword id="KW-1185">Reference proteome</keyword>
<keyword id="KW-0677">Repeat</keyword>
<keyword id="KW-0964">Secreted</keyword>
<keyword id="KW-0732">Signal</keyword>
<keyword id="KW-0813">Transport</keyword>
<keyword id="KW-0848">Vitamin D</keyword>
<accession>P53789</accession>
<evidence type="ECO:0000250" key="1">
    <source>
        <dbReference type="UniProtKB" id="P02774"/>
    </source>
</evidence>
<evidence type="ECO:0000250" key="2">
    <source>
        <dbReference type="UniProtKB" id="P21614"/>
    </source>
</evidence>
<evidence type="ECO:0000255" key="3"/>
<evidence type="ECO:0000255" key="4">
    <source>
        <dbReference type="PROSITE-ProRule" id="PRU00769"/>
    </source>
</evidence>
<reference key="1">
    <citation type="journal article" date="1994" name="Biochem. Mol. Biol. Int.">
        <title>Cloning and sequence analysis of cDNA encoding rabbit vitamin D-binding protein (Gc globulin).</title>
        <authorList>
            <person name="Osawa M."/>
            <person name="Tsuji T."/>
            <person name="Yukawa N."/>
            <person name="Saito T."/>
            <person name="Takeichi S."/>
        </authorList>
    </citation>
    <scope>NUCLEOTIDE SEQUENCE [MRNA]</scope>
    <source>
        <strain>New Zealand white</strain>
        <tissue>Liver</tissue>
    </source>
</reference>
<protein>
    <recommendedName>
        <fullName>Vitamin D-binding protein</fullName>
        <shortName>DBP</shortName>
        <shortName>VDB</shortName>
    </recommendedName>
    <alternativeName>
        <fullName>Gc-globulin</fullName>
    </alternativeName>
    <alternativeName>
        <fullName>Group-specific component</fullName>
    </alternativeName>
</protein>
<gene>
    <name type="primary">GC</name>
    <name type="synonym">DBP</name>
</gene>
<name>VTDB_RABIT</name>
<feature type="signal peptide" evidence="2">
    <location>
        <begin position="1"/>
        <end position="16"/>
    </location>
</feature>
<feature type="chain" id="PRO_0000001104" description="Vitamin D-binding protein">
    <location>
        <begin position="17"/>
        <end position="476"/>
    </location>
</feature>
<feature type="domain" description="Albumin 1" evidence="4">
    <location>
        <begin position="17"/>
        <end position="208"/>
    </location>
</feature>
<feature type="domain" description="Albumin 2" evidence="4">
    <location>
        <begin position="209"/>
        <end position="394"/>
    </location>
</feature>
<feature type="domain" description="Albumin 3" evidence="4">
    <location>
        <begin position="395"/>
        <end position="476"/>
    </location>
</feature>
<feature type="glycosylation site" description="N-linked (GlcNAc...) asparagine" evidence="3">
    <location>
        <position position="86"/>
    </location>
</feature>
<feature type="disulfide bond" evidence="4">
    <location>
        <begin position="29"/>
        <end position="75"/>
    </location>
</feature>
<feature type="disulfide bond" evidence="4">
    <location>
        <begin position="74"/>
        <end position="83"/>
    </location>
</feature>
<feature type="disulfide bond" evidence="4">
    <location>
        <begin position="96"/>
        <end position="112"/>
    </location>
</feature>
<feature type="disulfide bond" evidence="4">
    <location>
        <begin position="111"/>
        <end position="122"/>
    </location>
</feature>
<feature type="disulfide bond" evidence="4">
    <location>
        <begin position="145"/>
        <end position="190"/>
    </location>
</feature>
<feature type="disulfide bond" evidence="4">
    <location>
        <begin position="189"/>
        <end position="198"/>
    </location>
</feature>
<feature type="disulfide bond" evidence="4">
    <location>
        <begin position="220"/>
        <end position="266"/>
    </location>
</feature>
<feature type="disulfide bond" evidence="4">
    <location>
        <begin position="265"/>
        <end position="273"/>
    </location>
</feature>
<feature type="disulfide bond" evidence="4">
    <location>
        <begin position="286"/>
        <end position="300"/>
    </location>
</feature>
<feature type="disulfide bond" evidence="4">
    <location>
        <begin position="299"/>
        <end position="311"/>
    </location>
</feature>
<feature type="disulfide bond" evidence="4">
    <location>
        <begin position="335"/>
        <end position="376"/>
    </location>
</feature>
<feature type="disulfide bond" evidence="4">
    <location>
        <begin position="375"/>
        <end position="384"/>
    </location>
</feature>
<feature type="disulfide bond" evidence="4">
    <location>
        <begin position="407"/>
        <end position="453"/>
    </location>
</feature>
<feature type="disulfide bond" evidence="4">
    <location>
        <begin position="452"/>
        <end position="462"/>
    </location>
</feature>
<sequence length="476" mass="52912">MKRVLLLLLAVVCGHALERGRDYEKDKVCKELSTLGKDDFRTLSLVLYSRKFPSGTFDQVMKLVKEVVSLTEDCCTEDADPGCYDNRTSALSATSCESDSPFPVHPGTAECCTKEGLGRKLCMAALKHPPQEFPTYVEPANDEICEAFRQDPMEFADKFLYEYSSNYGQAPLPILVSYTKSYLSMVGTCCTSASPTVCFLKERLQIKHLSLLTTLSNRVCSQYAAYGKEKSRRSHLIKLAQKAPTAALKEVLPLAEDITNILSKCCESTSEDCMAKELPEHTVKICDTLSTKNPKFEECCQEKTPMDIFVCTYFMPAAQPPEPANVELPTSKDVCDSKNINVMDQYTFELSRKTHIPEVFLSKVLEPTLKSLSECCHSADSTACLNAKGPVLKKEVSSFIDKGQELCAGYSENTFTEYKKKLSQQLRAKLPEATSAELAELVEKHSDFASKCCSINSPPNYCDSEIDAEIKNLPEP</sequence>
<proteinExistence type="evidence at transcript level"/>
<dbReference type="EMBL" id="D29666">
    <property type="protein sequence ID" value="BAA06137.1"/>
    <property type="molecule type" value="mRNA"/>
</dbReference>
<dbReference type="RefSeq" id="NP_001075673.1">
    <property type="nucleotide sequence ID" value="NM_001082204.1"/>
</dbReference>
<dbReference type="SMR" id="P53789"/>
<dbReference type="FunCoup" id="P53789">
    <property type="interactions" value="27"/>
</dbReference>
<dbReference type="STRING" id="9986.ENSOCUP00000047639"/>
<dbReference type="GlyCosmos" id="P53789">
    <property type="glycosylation" value="1 site, No reported glycans"/>
</dbReference>
<dbReference type="PaxDb" id="9986-ENSOCUP00000006902"/>
<dbReference type="GeneID" id="100008994"/>
<dbReference type="KEGG" id="ocu:100008994"/>
<dbReference type="CTD" id="2638"/>
<dbReference type="eggNOG" id="ENOG502QTPW">
    <property type="taxonomic scope" value="Eukaryota"/>
</dbReference>
<dbReference type="InParanoid" id="P53789"/>
<dbReference type="OrthoDB" id="9874779at2759"/>
<dbReference type="Proteomes" id="UP000001811">
    <property type="component" value="Unplaced"/>
</dbReference>
<dbReference type="GO" id="GO:0072562">
    <property type="term" value="C:blood microparticle"/>
    <property type="evidence" value="ECO:0007669"/>
    <property type="project" value="TreeGrafter"/>
</dbReference>
<dbReference type="GO" id="GO:0005737">
    <property type="term" value="C:cytoplasm"/>
    <property type="evidence" value="ECO:0007669"/>
    <property type="project" value="TreeGrafter"/>
</dbReference>
<dbReference type="GO" id="GO:0003779">
    <property type="term" value="F:actin binding"/>
    <property type="evidence" value="ECO:0000250"/>
    <property type="project" value="UniProtKB"/>
</dbReference>
<dbReference type="GO" id="GO:0005499">
    <property type="term" value="F:vitamin D binding"/>
    <property type="evidence" value="ECO:0007669"/>
    <property type="project" value="UniProtKB-KW"/>
</dbReference>
<dbReference type="GO" id="GO:0090482">
    <property type="term" value="F:vitamin transmembrane transporter activity"/>
    <property type="evidence" value="ECO:0007669"/>
    <property type="project" value="InterPro"/>
</dbReference>
<dbReference type="CDD" id="cd00015">
    <property type="entry name" value="ALBUMIN"/>
    <property type="match status" value="1"/>
</dbReference>
<dbReference type="FunFam" id="1.10.246.10:FF:000009">
    <property type="entry name" value="Vitamin D-binding protein"/>
    <property type="match status" value="1"/>
</dbReference>
<dbReference type="Gene3D" id="1.10.246.10">
    <property type="match status" value="5"/>
</dbReference>
<dbReference type="InterPro" id="IPR000264">
    <property type="entry name" value="ALB/AFP/VDB"/>
</dbReference>
<dbReference type="InterPro" id="IPR020858">
    <property type="entry name" value="Serum_albumin-like"/>
</dbReference>
<dbReference type="InterPro" id="IPR020857">
    <property type="entry name" value="Serum_albumin_CS"/>
</dbReference>
<dbReference type="InterPro" id="IPR014760">
    <property type="entry name" value="Serum_albumin_N"/>
</dbReference>
<dbReference type="InterPro" id="IPR000213">
    <property type="entry name" value="VitD-bd"/>
</dbReference>
<dbReference type="InterPro" id="IPR015247">
    <property type="entry name" value="VitD-bind_III"/>
</dbReference>
<dbReference type="PANTHER" id="PTHR11385">
    <property type="entry name" value="SERUM ALBUMIN-RELATED"/>
    <property type="match status" value="1"/>
</dbReference>
<dbReference type="PANTHER" id="PTHR11385:SF11">
    <property type="entry name" value="VITAMIN D-BINDING PROTEIN"/>
    <property type="match status" value="1"/>
</dbReference>
<dbReference type="Pfam" id="PF00273">
    <property type="entry name" value="Serum_albumin"/>
    <property type="match status" value="2"/>
</dbReference>
<dbReference type="Pfam" id="PF09164">
    <property type="entry name" value="VitD-bind_III"/>
    <property type="match status" value="1"/>
</dbReference>
<dbReference type="PRINTS" id="PR00802">
    <property type="entry name" value="SERUMALBUMIN"/>
</dbReference>
<dbReference type="PRINTS" id="PR00804">
    <property type="entry name" value="VITAMNDBNDNG"/>
</dbReference>
<dbReference type="SMART" id="SM00103">
    <property type="entry name" value="ALBUMIN"/>
    <property type="match status" value="2"/>
</dbReference>
<dbReference type="SUPFAM" id="SSF48552">
    <property type="entry name" value="Serum albumin-like"/>
    <property type="match status" value="3"/>
</dbReference>
<dbReference type="PROSITE" id="PS00212">
    <property type="entry name" value="ALBUMIN_1"/>
    <property type="match status" value="1"/>
</dbReference>
<dbReference type="PROSITE" id="PS51438">
    <property type="entry name" value="ALBUMIN_2"/>
    <property type="match status" value="2"/>
</dbReference>